<comment type="subcellular location">
    <subcellularLocation>
        <location evidence="2">Cell membrane</location>
        <topology evidence="2">Multi-pass membrane protein</topology>
    </subcellularLocation>
</comment>
<comment type="similarity">
    <text evidence="2">Belongs to the EamA transporter family.</text>
</comment>
<reference key="1">
    <citation type="journal article" date="1995" name="Science">
        <title>Whole-genome random sequencing and assembly of Haemophilus influenzae Rd.</title>
        <authorList>
            <person name="Fleischmann R.D."/>
            <person name="Adams M.D."/>
            <person name="White O."/>
            <person name="Clayton R.A."/>
            <person name="Kirkness E.F."/>
            <person name="Kerlavage A.R."/>
            <person name="Bult C.J."/>
            <person name="Tomb J.-F."/>
            <person name="Dougherty B.A."/>
            <person name="Merrick J.M."/>
            <person name="McKenney K."/>
            <person name="Sutton G.G."/>
            <person name="FitzHugh W."/>
            <person name="Fields C.A."/>
            <person name="Gocayne J.D."/>
            <person name="Scott J.D."/>
            <person name="Shirley R."/>
            <person name="Liu L.-I."/>
            <person name="Glodek A."/>
            <person name="Kelley J.M."/>
            <person name="Weidman J.F."/>
            <person name="Phillips C.A."/>
            <person name="Spriggs T."/>
            <person name="Hedblom E."/>
            <person name="Cotton M.D."/>
            <person name="Utterback T.R."/>
            <person name="Hanna M.C."/>
            <person name="Nguyen D.T."/>
            <person name="Saudek D.M."/>
            <person name="Brandon R.C."/>
            <person name="Fine L.D."/>
            <person name="Fritchman J.L."/>
            <person name="Fuhrmann J.L."/>
            <person name="Geoghagen N.S.M."/>
            <person name="Gnehm C.L."/>
            <person name="McDonald L.A."/>
            <person name="Small K.V."/>
            <person name="Fraser C.M."/>
            <person name="Smith H.O."/>
            <person name="Venter J.C."/>
        </authorList>
    </citation>
    <scope>NUCLEOTIDE SEQUENCE [LARGE SCALE GENOMIC DNA]</scope>
    <source>
        <strain>ATCC 51907 / DSM 11121 / KW20 / Rd</strain>
    </source>
</reference>
<dbReference type="EMBL" id="L42023">
    <property type="protein sequence ID" value="AAC22534.1"/>
    <property type="molecule type" value="Genomic_DNA"/>
</dbReference>
<dbReference type="RefSeq" id="NP_439039.1">
    <property type="nucleotide sequence ID" value="NC_000907.1"/>
</dbReference>
<dbReference type="SMR" id="P71360"/>
<dbReference type="STRING" id="71421.HI_0878"/>
<dbReference type="EnsemblBacteria" id="AAC22534">
    <property type="protein sequence ID" value="AAC22534"/>
    <property type="gene ID" value="HI_0878"/>
</dbReference>
<dbReference type="KEGG" id="hin:HI_0878"/>
<dbReference type="PATRIC" id="fig|71421.8.peg.920"/>
<dbReference type="eggNOG" id="COG0697">
    <property type="taxonomic scope" value="Bacteria"/>
</dbReference>
<dbReference type="HOGENOM" id="CLU_074108_1_0_6"/>
<dbReference type="OrthoDB" id="8479066at2"/>
<dbReference type="PhylomeDB" id="P71360"/>
<dbReference type="BioCyc" id="HINF71421:G1GJ1-918-MONOMER"/>
<dbReference type="Proteomes" id="UP000000579">
    <property type="component" value="Chromosome"/>
</dbReference>
<dbReference type="GO" id="GO:0016020">
    <property type="term" value="C:membrane"/>
    <property type="evidence" value="ECO:0000318"/>
    <property type="project" value="GO_Central"/>
</dbReference>
<dbReference type="GO" id="GO:0005886">
    <property type="term" value="C:plasma membrane"/>
    <property type="evidence" value="ECO:0007669"/>
    <property type="project" value="UniProtKB-SubCell"/>
</dbReference>
<dbReference type="Gene3D" id="1.10.3730.20">
    <property type="match status" value="1"/>
</dbReference>
<dbReference type="InterPro" id="IPR050638">
    <property type="entry name" value="AA-Vitamin_Transporters"/>
</dbReference>
<dbReference type="InterPro" id="IPR000620">
    <property type="entry name" value="EamA_dom"/>
</dbReference>
<dbReference type="PANTHER" id="PTHR32322:SF2">
    <property type="entry name" value="EAMA DOMAIN-CONTAINING PROTEIN"/>
    <property type="match status" value="1"/>
</dbReference>
<dbReference type="PANTHER" id="PTHR32322">
    <property type="entry name" value="INNER MEMBRANE TRANSPORTER"/>
    <property type="match status" value="1"/>
</dbReference>
<dbReference type="Pfam" id="PF00892">
    <property type="entry name" value="EamA"/>
    <property type="match status" value="2"/>
</dbReference>
<dbReference type="SUPFAM" id="SSF103481">
    <property type="entry name" value="Multidrug resistance efflux transporter EmrE"/>
    <property type="match status" value="2"/>
</dbReference>
<organism>
    <name type="scientific">Haemophilus influenzae (strain ATCC 51907 / DSM 11121 / KW20 / Rd)</name>
    <dbReference type="NCBI Taxonomy" id="71421"/>
    <lineage>
        <taxon>Bacteria</taxon>
        <taxon>Pseudomonadati</taxon>
        <taxon>Pseudomonadota</taxon>
        <taxon>Gammaproteobacteria</taxon>
        <taxon>Pasteurellales</taxon>
        <taxon>Pasteurellaceae</taxon>
        <taxon>Haemophilus</taxon>
    </lineage>
</organism>
<protein>
    <recommendedName>
        <fullName>Uncharacterized transporter HI_0878</fullName>
    </recommendedName>
</protein>
<name>Y878_HAEIN</name>
<proteinExistence type="inferred from homology"/>
<keyword id="KW-1003">Cell membrane</keyword>
<keyword id="KW-0472">Membrane</keyword>
<keyword id="KW-1185">Reference proteome</keyword>
<keyword id="KW-0677">Repeat</keyword>
<keyword id="KW-0812">Transmembrane</keyword>
<keyword id="KW-1133">Transmembrane helix</keyword>
<keyword id="KW-0813">Transport</keyword>
<evidence type="ECO:0000255" key="1"/>
<evidence type="ECO:0000305" key="2"/>
<accession>P71360</accession>
<gene>
    <name type="ordered locus">HI_0878</name>
</gene>
<feature type="chain" id="PRO_0000108172" description="Uncharacterized transporter HI_0878">
    <location>
        <begin position="1"/>
        <end position="306"/>
    </location>
</feature>
<feature type="transmembrane region" description="Helical" evidence="1">
    <location>
        <begin position="6"/>
        <end position="26"/>
    </location>
</feature>
<feature type="transmembrane region" description="Helical" evidence="1">
    <location>
        <begin position="35"/>
        <end position="55"/>
    </location>
</feature>
<feature type="transmembrane region" description="Helical" evidence="1">
    <location>
        <begin position="69"/>
        <end position="89"/>
    </location>
</feature>
<feature type="transmembrane region" description="Helical" evidence="1">
    <location>
        <begin position="98"/>
        <end position="118"/>
    </location>
</feature>
<feature type="transmembrane region" description="Helical" evidence="1">
    <location>
        <begin position="122"/>
        <end position="142"/>
    </location>
</feature>
<feature type="transmembrane region" description="Helical" evidence="1">
    <location>
        <begin position="154"/>
        <end position="174"/>
    </location>
</feature>
<feature type="transmembrane region" description="Helical" evidence="1">
    <location>
        <begin position="186"/>
        <end position="206"/>
    </location>
</feature>
<feature type="transmembrane region" description="Helical" evidence="1">
    <location>
        <begin position="211"/>
        <end position="231"/>
    </location>
</feature>
<feature type="transmembrane region" description="Helical" evidence="1">
    <location>
        <begin position="247"/>
        <end position="267"/>
    </location>
</feature>
<feature type="transmembrane region" description="Helical" evidence="1">
    <location>
        <begin position="281"/>
        <end position="301"/>
    </location>
</feature>
<feature type="domain" description="EamA 1">
    <location>
        <begin position="17"/>
        <end position="142"/>
    </location>
</feature>
<feature type="domain" description="EamA 2">
    <location>
        <begin position="166"/>
        <end position="296"/>
    </location>
</feature>
<sequence length="306" mass="33893">MKQQPLLGFTFALITAMAWGSLPIALKQVLSVMNAQTIVWYRFIIAAVSLLALLAYKKQLPELMKVRQYAWIMLIGVIGLTSNFLLFSSSLNYIEPSVAQIFIHLSSFGMLICGVLIFKEKLGLHQKIGLFLLLIGLGLFFNDRFDAFAGLNQYSTGVILGVGGALIWVAYGMAQKLMLRKFNSQQILLMMYLGCAIAFMPMADFSQVQELTPLALICFIYCCLNTLIGYGSYAEALNRWDVSKVSVVITLVPLFTILFSHIAHYFSPADFAAPELNNISYIGAFVVVCGAILSAIGHKLLPHKNH</sequence>